<feature type="chain" id="PRO_0000318412" description="Protein translocase subunit SecA">
    <location>
        <begin position="1"/>
        <end position="942"/>
    </location>
</feature>
<feature type="binding site" evidence="1">
    <location>
        <position position="90"/>
    </location>
    <ligand>
        <name>ATP</name>
        <dbReference type="ChEBI" id="CHEBI:30616"/>
    </ligand>
</feature>
<feature type="binding site" evidence="1">
    <location>
        <begin position="108"/>
        <end position="112"/>
    </location>
    <ligand>
        <name>ATP</name>
        <dbReference type="ChEBI" id="CHEBI:30616"/>
    </ligand>
</feature>
<feature type="binding site" evidence="1">
    <location>
        <position position="509"/>
    </location>
    <ligand>
        <name>ATP</name>
        <dbReference type="ChEBI" id="CHEBI:30616"/>
    </ligand>
</feature>
<proteinExistence type="inferred from homology"/>
<keyword id="KW-0067">ATP-binding</keyword>
<keyword id="KW-0997">Cell inner membrane</keyword>
<keyword id="KW-1003">Cell membrane</keyword>
<keyword id="KW-0963">Cytoplasm</keyword>
<keyword id="KW-0472">Membrane</keyword>
<keyword id="KW-0547">Nucleotide-binding</keyword>
<keyword id="KW-0653">Protein transport</keyword>
<keyword id="KW-1185">Reference proteome</keyword>
<keyword id="KW-0793">Thylakoid</keyword>
<keyword id="KW-1278">Translocase</keyword>
<keyword id="KW-0811">Translocation</keyword>
<keyword id="KW-0813">Transport</keyword>
<name>SECA_PROMT</name>
<reference key="1">
    <citation type="journal article" date="2007" name="PLoS Genet.">
        <title>Patterns and implications of gene gain and loss in the evolution of Prochlorococcus.</title>
        <authorList>
            <person name="Kettler G.C."/>
            <person name="Martiny A.C."/>
            <person name="Huang K."/>
            <person name="Zucker J."/>
            <person name="Coleman M.L."/>
            <person name="Rodrigue S."/>
            <person name="Chen F."/>
            <person name="Lapidus A."/>
            <person name="Ferriera S."/>
            <person name="Johnson J."/>
            <person name="Steglich C."/>
            <person name="Church G.M."/>
            <person name="Richardson P."/>
            <person name="Chisholm S.W."/>
        </authorList>
    </citation>
    <scope>NUCLEOTIDE SEQUENCE [LARGE SCALE GENOMIC DNA]</scope>
    <source>
        <strain>NATL2A</strain>
    </source>
</reference>
<dbReference type="EC" id="7.4.2.8" evidence="1"/>
<dbReference type="EMBL" id="CP000095">
    <property type="protein sequence ID" value="AAZ58710.1"/>
    <property type="molecule type" value="Genomic_DNA"/>
</dbReference>
<dbReference type="RefSeq" id="WP_011295564.1">
    <property type="nucleotide sequence ID" value="NC_007335.2"/>
</dbReference>
<dbReference type="SMR" id="Q46IG8"/>
<dbReference type="STRING" id="59920.PMN2A_1220"/>
<dbReference type="KEGG" id="pmn:PMN2A_1220"/>
<dbReference type="HOGENOM" id="CLU_005314_3_0_3"/>
<dbReference type="OrthoDB" id="9805579at2"/>
<dbReference type="PhylomeDB" id="Q46IG8"/>
<dbReference type="Proteomes" id="UP000002535">
    <property type="component" value="Chromosome"/>
</dbReference>
<dbReference type="GO" id="GO:0031522">
    <property type="term" value="C:cell envelope Sec protein transport complex"/>
    <property type="evidence" value="ECO:0007669"/>
    <property type="project" value="TreeGrafter"/>
</dbReference>
<dbReference type="GO" id="GO:0005829">
    <property type="term" value="C:cytosol"/>
    <property type="evidence" value="ECO:0007669"/>
    <property type="project" value="TreeGrafter"/>
</dbReference>
<dbReference type="GO" id="GO:0031676">
    <property type="term" value="C:plasma membrane-derived thylakoid membrane"/>
    <property type="evidence" value="ECO:0007669"/>
    <property type="project" value="UniProtKB-SubCell"/>
</dbReference>
<dbReference type="GO" id="GO:0005524">
    <property type="term" value="F:ATP binding"/>
    <property type="evidence" value="ECO:0007669"/>
    <property type="project" value="UniProtKB-UniRule"/>
</dbReference>
<dbReference type="GO" id="GO:0008564">
    <property type="term" value="F:protein-exporting ATPase activity"/>
    <property type="evidence" value="ECO:0007669"/>
    <property type="project" value="UniProtKB-EC"/>
</dbReference>
<dbReference type="GO" id="GO:0065002">
    <property type="term" value="P:intracellular protein transmembrane transport"/>
    <property type="evidence" value="ECO:0007669"/>
    <property type="project" value="UniProtKB-UniRule"/>
</dbReference>
<dbReference type="GO" id="GO:0017038">
    <property type="term" value="P:protein import"/>
    <property type="evidence" value="ECO:0007669"/>
    <property type="project" value="InterPro"/>
</dbReference>
<dbReference type="GO" id="GO:0006605">
    <property type="term" value="P:protein targeting"/>
    <property type="evidence" value="ECO:0007669"/>
    <property type="project" value="UniProtKB-UniRule"/>
</dbReference>
<dbReference type="GO" id="GO:0043952">
    <property type="term" value="P:protein transport by the Sec complex"/>
    <property type="evidence" value="ECO:0007669"/>
    <property type="project" value="TreeGrafter"/>
</dbReference>
<dbReference type="CDD" id="cd17928">
    <property type="entry name" value="DEXDc_SecA"/>
    <property type="match status" value="1"/>
</dbReference>
<dbReference type="CDD" id="cd18803">
    <property type="entry name" value="SF2_C_secA"/>
    <property type="match status" value="1"/>
</dbReference>
<dbReference type="FunFam" id="3.90.1440.10:FF:000003">
    <property type="entry name" value="Preprotein translocase SecA subunit"/>
    <property type="match status" value="1"/>
</dbReference>
<dbReference type="FunFam" id="3.40.50.300:FF:000429">
    <property type="entry name" value="Preprotein translocase subunit SecA"/>
    <property type="match status" value="1"/>
</dbReference>
<dbReference type="FunFam" id="1.10.3060.10:FF:000003">
    <property type="entry name" value="Protein translocase subunit SecA"/>
    <property type="match status" value="1"/>
</dbReference>
<dbReference type="FunFam" id="3.40.50.300:FF:000334">
    <property type="entry name" value="Protein translocase subunit SecA"/>
    <property type="match status" value="1"/>
</dbReference>
<dbReference type="Gene3D" id="1.10.3060.10">
    <property type="entry name" value="Helical scaffold and wing domains of SecA"/>
    <property type="match status" value="1"/>
</dbReference>
<dbReference type="Gene3D" id="3.40.50.300">
    <property type="entry name" value="P-loop containing nucleotide triphosphate hydrolases"/>
    <property type="match status" value="2"/>
</dbReference>
<dbReference type="Gene3D" id="3.90.1440.10">
    <property type="entry name" value="SecA, preprotein cross-linking domain"/>
    <property type="match status" value="1"/>
</dbReference>
<dbReference type="HAMAP" id="MF_01382">
    <property type="entry name" value="SecA"/>
    <property type="match status" value="1"/>
</dbReference>
<dbReference type="InterPro" id="IPR014001">
    <property type="entry name" value="Helicase_ATP-bd"/>
</dbReference>
<dbReference type="InterPro" id="IPR027417">
    <property type="entry name" value="P-loop_NTPase"/>
</dbReference>
<dbReference type="InterPro" id="IPR000185">
    <property type="entry name" value="SecA"/>
</dbReference>
<dbReference type="InterPro" id="IPR020937">
    <property type="entry name" value="SecA_CS"/>
</dbReference>
<dbReference type="InterPro" id="IPR011115">
    <property type="entry name" value="SecA_DEAD"/>
</dbReference>
<dbReference type="InterPro" id="IPR014018">
    <property type="entry name" value="SecA_motor_DEAD"/>
</dbReference>
<dbReference type="InterPro" id="IPR011130">
    <property type="entry name" value="SecA_preprotein_X-link_dom"/>
</dbReference>
<dbReference type="InterPro" id="IPR044722">
    <property type="entry name" value="SecA_SF2_C"/>
</dbReference>
<dbReference type="InterPro" id="IPR011116">
    <property type="entry name" value="SecA_Wing/Scaffold"/>
</dbReference>
<dbReference type="InterPro" id="IPR036266">
    <property type="entry name" value="SecA_Wing/Scaffold_sf"/>
</dbReference>
<dbReference type="InterPro" id="IPR036670">
    <property type="entry name" value="SecA_X-link_sf"/>
</dbReference>
<dbReference type="NCBIfam" id="TIGR00963">
    <property type="entry name" value="secA"/>
    <property type="match status" value="1"/>
</dbReference>
<dbReference type="PANTHER" id="PTHR30612:SF0">
    <property type="entry name" value="CHLOROPLAST PROTEIN-TRANSPORTING ATPASE"/>
    <property type="match status" value="1"/>
</dbReference>
<dbReference type="PANTHER" id="PTHR30612">
    <property type="entry name" value="SECA INNER MEMBRANE COMPONENT OF SEC PROTEIN SECRETION SYSTEM"/>
    <property type="match status" value="1"/>
</dbReference>
<dbReference type="Pfam" id="PF21090">
    <property type="entry name" value="P-loop_SecA"/>
    <property type="match status" value="1"/>
</dbReference>
<dbReference type="Pfam" id="PF07517">
    <property type="entry name" value="SecA_DEAD"/>
    <property type="match status" value="1"/>
</dbReference>
<dbReference type="Pfam" id="PF01043">
    <property type="entry name" value="SecA_PP_bind"/>
    <property type="match status" value="1"/>
</dbReference>
<dbReference type="Pfam" id="PF07516">
    <property type="entry name" value="SecA_SW"/>
    <property type="match status" value="1"/>
</dbReference>
<dbReference type="PRINTS" id="PR00906">
    <property type="entry name" value="SECA"/>
</dbReference>
<dbReference type="SMART" id="SM00957">
    <property type="entry name" value="SecA_DEAD"/>
    <property type="match status" value="1"/>
</dbReference>
<dbReference type="SMART" id="SM00958">
    <property type="entry name" value="SecA_PP_bind"/>
    <property type="match status" value="1"/>
</dbReference>
<dbReference type="SUPFAM" id="SSF81886">
    <property type="entry name" value="Helical scaffold and wing domains of SecA"/>
    <property type="match status" value="1"/>
</dbReference>
<dbReference type="SUPFAM" id="SSF52540">
    <property type="entry name" value="P-loop containing nucleoside triphosphate hydrolases"/>
    <property type="match status" value="2"/>
</dbReference>
<dbReference type="SUPFAM" id="SSF81767">
    <property type="entry name" value="Pre-protein crosslinking domain of SecA"/>
    <property type="match status" value="1"/>
</dbReference>
<dbReference type="PROSITE" id="PS01312">
    <property type="entry name" value="SECA"/>
    <property type="match status" value="1"/>
</dbReference>
<dbReference type="PROSITE" id="PS51196">
    <property type="entry name" value="SECA_MOTOR_DEAD"/>
    <property type="match status" value="1"/>
</dbReference>
<organism>
    <name type="scientific">Prochlorococcus marinus (strain NATL2A)</name>
    <dbReference type="NCBI Taxonomy" id="59920"/>
    <lineage>
        <taxon>Bacteria</taxon>
        <taxon>Bacillati</taxon>
        <taxon>Cyanobacteriota</taxon>
        <taxon>Cyanophyceae</taxon>
        <taxon>Synechococcales</taxon>
        <taxon>Prochlorococcaceae</taxon>
        <taxon>Prochlorococcus</taxon>
    </lineage>
</organism>
<protein>
    <recommendedName>
        <fullName evidence="1">Protein translocase subunit SecA</fullName>
        <ecNumber evidence="1">7.4.2.8</ecNumber>
    </recommendedName>
</protein>
<accession>Q46IG8</accession>
<sequence length="942" mass="107409">MFGQLLGDPNKRRLKNYYPIVSEINILEEDISVLSDEELRGSTNEFRQRLEKAENSDKQLKILDELLPNAFAVVREASKRVLGMRHFDVQLIGGMVLHEGQIAEMKTGEGKTLVSTLPSYLNALTGKGVHVVTVNDYLAKRDAEWMGQVHRFLGLEVGLIQQDMNPRERKKNYQCDITYATNSELGFDYLRDNMAADKAEIVQRDFQFCVIDEVDSILIDEARTPLIISGQVERPQEKYQKAAEVVMKLQRASELGKDGIDPEGDYEVDEKQRSCVLTDDGFAKTEELLEVKDLFDPKDPWAHYVTNALKAKELFTKDVNYIVRNGEAVIVDEFTGRVMPGRRWSDGQHQAIEAKENLAIQPETQTLASITYQNFFLLYPRLSGMTGTAKTEEVEFDKTYKLKTSVIPTNKKVSREDWVDQVFKTENAKWRAVAKETSLINKQGRPILVGTTSVEKSELLSTLLAEENIPHNLLNAKPENVERESEIVAQAGRKGAVTIATNMAGRGTDIILGGNSEYMAKLKIKQVLSSRLVKPEDRHNPPVPLQRDKASGFKSLEVKAEAKTSNQSSSLNNLFPVILSDKTDNELGQLAAKLVKEWGDRALTLGELEDYIATAAEKTPTKDENILAIRRAIHSIKTEYEVITNNEEKLVTEAGGLHVIGTERHESRRVDNQLRGRAGRQGDFGSTRFFLSLEDNLLRIFGGDRVAGLMNAFRVEEDMPIESGMLTRSLEGAQKKVETYYYDIRKQVFEYDEVMNNQRKAVYSERRRVLKGQELKSQVISYGEKTMGEIVDAYINEELPPEEWELDKLVGKVQEFIYLLNDLKSSELIGLDTNQLKVFLQEQMRNAYDLKEAQLEETHPGIMREAEKFFMLQQLDTLWREHLQSMDSLRESVGLRGYGQKDPLIEYKNEGYDMFLEMMINFRRNVIYSMFMFQPTTKKVES</sequence>
<comment type="function">
    <text evidence="1">Part of the Sec protein translocase complex. Interacts with the SecYEG preprotein conducting channel. Has a central role in coupling the hydrolysis of ATP to the transfer of proteins into and across the cell membrane, serving as an ATP-driven molecular motor driving the stepwise translocation of polypeptide chains across the membrane.</text>
</comment>
<comment type="function">
    <text evidence="1">Probably participates in protein translocation into and across both the cytoplasmic and thylakoid membranes in cyanobacterial cells.</text>
</comment>
<comment type="catalytic activity">
    <reaction evidence="1">
        <text>ATP + H2O + cellular proteinSide 1 = ADP + phosphate + cellular proteinSide 2.</text>
        <dbReference type="EC" id="7.4.2.8"/>
    </reaction>
</comment>
<comment type="subunit">
    <text evidence="1">Monomer and homodimer. Part of the essential Sec protein translocation apparatus which comprises SecA, SecYEG and auxiliary proteins SecDF. Other proteins may also be involved.</text>
</comment>
<comment type="subcellular location">
    <subcellularLocation>
        <location evidence="1">Cell inner membrane</location>
        <topology evidence="1">Peripheral membrane protein</topology>
        <orientation evidence="1">Cytoplasmic side</orientation>
    </subcellularLocation>
    <subcellularLocation>
        <location evidence="1">Cellular thylakoid membrane</location>
        <topology evidence="1">Peripheral membrane protein</topology>
        <orientation evidence="1">Cytoplasmic side</orientation>
    </subcellularLocation>
    <subcellularLocation>
        <location evidence="1">Cytoplasm</location>
    </subcellularLocation>
</comment>
<comment type="similarity">
    <text evidence="1">Belongs to the SecA family.</text>
</comment>
<gene>
    <name evidence="1" type="primary">secA</name>
    <name type="ordered locus">PMN2A_1220</name>
</gene>
<evidence type="ECO:0000255" key="1">
    <source>
        <dbReference type="HAMAP-Rule" id="MF_01382"/>
    </source>
</evidence>